<organism>
    <name type="scientific">Burkholderia pseudomallei (strain 1710b)</name>
    <dbReference type="NCBI Taxonomy" id="320372"/>
    <lineage>
        <taxon>Bacteria</taxon>
        <taxon>Pseudomonadati</taxon>
        <taxon>Pseudomonadota</taxon>
        <taxon>Betaproteobacteria</taxon>
        <taxon>Burkholderiales</taxon>
        <taxon>Burkholderiaceae</taxon>
        <taxon>Burkholderia</taxon>
        <taxon>pseudomallei group</taxon>
    </lineage>
</organism>
<reference key="1">
    <citation type="journal article" date="2010" name="Genome Biol. Evol.">
        <title>Continuing evolution of Burkholderia mallei through genome reduction and large-scale rearrangements.</title>
        <authorList>
            <person name="Losada L."/>
            <person name="Ronning C.M."/>
            <person name="DeShazer D."/>
            <person name="Woods D."/>
            <person name="Fedorova N."/>
            <person name="Kim H.S."/>
            <person name="Shabalina S.A."/>
            <person name="Pearson T.R."/>
            <person name="Brinkac L."/>
            <person name="Tan P."/>
            <person name="Nandi T."/>
            <person name="Crabtree J."/>
            <person name="Badger J."/>
            <person name="Beckstrom-Sternberg S."/>
            <person name="Saqib M."/>
            <person name="Schutzer S.E."/>
            <person name="Keim P."/>
            <person name="Nierman W.C."/>
        </authorList>
    </citation>
    <scope>NUCLEOTIDE SEQUENCE [LARGE SCALE GENOMIC DNA]</scope>
    <source>
        <strain>1710b</strain>
    </source>
</reference>
<name>MDH_BURP1</name>
<proteinExistence type="evidence at protein level"/>
<sequence length="327" mass="35015">MAKPAKRVAVTGAAGQIAYSLLFRIANGDLLGKDQPVILQLLDLPQAQAAVKGVVMELDDCAFPLLAGVVITDDPKVAFKDADVALLVGARPRSKGMERKDLLSANAEIFTVQGAALNEVASRDVKVLVVGNPANTNAYIAMKSAPDLPKKNFTAMLRLDHNRALSQLAAKSGKPVASIEKLAVWGNHSPTMYPDFRFATAEGESLLKLINDDVWNRDTFIPTVGKRGAAIIEARGLSSAASAANAAIDHVRDWVLGTNGKWVTMGIPSDGSYGIPEDIIYGVPVICENGEYKRVEGLEIDAFSREKMDGTLAELLEERDGVAHLLK</sequence>
<feature type="initiator methionine" description="Removed" evidence="1">
    <location>
        <position position="1"/>
    </location>
</feature>
<feature type="chain" id="PRO_0000294380" description="Malate dehydrogenase">
    <location>
        <begin position="2"/>
        <end position="327"/>
    </location>
</feature>
<feature type="active site" description="Proton acceptor" evidence="2">
    <location>
        <position position="188"/>
    </location>
</feature>
<feature type="binding site" evidence="2">
    <location>
        <begin position="12"/>
        <end position="18"/>
    </location>
    <ligand>
        <name>NAD(+)</name>
        <dbReference type="ChEBI" id="CHEBI:57540"/>
    </ligand>
</feature>
<feature type="binding site" evidence="2">
    <location>
        <position position="93"/>
    </location>
    <ligand>
        <name>substrate</name>
    </ligand>
</feature>
<feature type="binding site" evidence="2">
    <location>
        <position position="99"/>
    </location>
    <ligand>
        <name>substrate</name>
    </ligand>
</feature>
<feature type="binding site" evidence="2">
    <location>
        <position position="106"/>
    </location>
    <ligand>
        <name>NAD(+)</name>
        <dbReference type="ChEBI" id="CHEBI:57540"/>
    </ligand>
</feature>
<feature type="binding site" evidence="2">
    <location>
        <position position="113"/>
    </location>
    <ligand>
        <name>NAD(+)</name>
        <dbReference type="ChEBI" id="CHEBI:57540"/>
    </ligand>
</feature>
<feature type="binding site" evidence="2">
    <location>
        <begin position="130"/>
        <end position="132"/>
    </location>
    <ligand>
        <name>NAD(+)</name>
        <dbReference type="ChEBI" id="CHEBI:57540"/>
    </ligand>
</feature>
<feature type="binding site" evidence="2">
    <location>
        <position position="132"/>
    </location>
    <ligand>
        <name>substrate</name>
    </ligand>
</feature>
<feature type="binding site" evidence="2">
    <location>
        <position position="163"/>
    </location>
    <ligand>
        <name>substrate</name>
    </ligand>
</feature>
<feature type="strand" evidence="3">
    <location>
        <begin position="6"/>
        <end position="12"/>
    </location>
</feature>
<feature type="helix" evidence="3">
    <location>
        <begin position="16"/>
        <end position="26"/>
    </location>
</feature>
<feature type="turn" evidence="3">
    <location>
        <begin position="27"/>
        <end position="31"/>
    </location>
</feature>
<feature type="strand" evidence="3">
    <location>
        <begin position="37"/>
        <end position="42"/>
    </location>
</feature>
<feature type="helix" evidence="3">
    <location>
        <begin position="45"/>
        <end position="47"/>
    </location>
</feature>
<feature type="helix" evidence="3">
    <location>
        <begin position="48"/>
        <end position="59"/>
    </location>
</feature>
<feature type="strand" evidence="3">
    <location>
        <begin position="66"/>
        <end position="73"/>
    </location>
</feature>
<feature type="helix" evidence="3">
    <location>
        <begin position="75"/>
        <end position="79"/>
    </location>
</feature>
<feature type="strand" evidence="3">
    <location>
        <begin position="83"/>
        <end position="87"/>
    </location>
</feature>
<feature type="helix" evidence="3">
    <location>
        <begin position="99"/>
        <end position="120"/>
    </location>
</feature>
<feature type="strand" evidence="3">
    <location>
        <begin position="126"/>
        <end position="129"/>
    </location>
</feature>
<feature type="strand" evidence="3">
    <location>
        <begin position="131"/>
        <end position="133"/>
    </location>
</feature>
<feature type="helix" evidence="3">
    <location>
        <begin position="134"/>
        <end position="143"/>
    </location>
</feature>
<feature type="helix" evidence="3">
    <location>
        <begin position="150"/>
        <end position="152"/>
    </location>
</feature>
<feature type="strand" evidence="3">
    <location>
        <begin position="153"/>
        <end position="155"/>
    </location>
</feature>
<feature type="helix" evidence="3">
    <location>
        <begin position="158"/>
        <end position="172"/>
    </location>
</feature>
<feature type="helix" evidence="3">
    <location>
        <begin position="176"/>
        <end position="178"/>
    </location>
</feature>
<feature type="strand" evidence="3">
    <location>
        <begin position="183"/>
        <end position="186"/>
    </location>
</feature>
<feature type="strand" evidence="3">
    <location>
        <begin position="193"/>
        <end position="195"/>
    </location>
</feature>
<feature type="helix" evidence="3">
    <location>
        <begin position="206"/>
        <end position="210"/>
    </location>
</feature>
<feature type="helix" evidence="3">
    <location>
        <begin position="214"/>
        <end position="218"/>
    </location>
</feature>
<feature type="helix" evidence="3">
    <location>
        <begin position="220"/>
        <end position="225"/>
    </location>
</feature>
<feature type="helix" evidence="3">
    <location>
        <begin position="227"/>
        <end position="235"/>
    </location>
</feature>
<feature type="helix" evidence="3">
    <location>
        <begin position="240"/>
        <end position="256"/>
    </location>
</feature>
<feature type="strand" evidence="3">
    <location>
        <begin position="263"/>
        <end position="268"/>
    </location>
</feature>
<feature type="helix" evidence="3">
    <location>
        <begin position="272"/>
        <end position="274"/>
    </location>
</feature>
<feature type="strand" evidence="3">
    <location>
        <begin position="280"/>
        <end position="288"/>
    </location>
</feature>
<feature type="strand" evidence="3">
    <location>
        <begin position="291"/>
        <end position="294"/>
    </location>
</feature>
<feature type="helix" evidence="3">
    <location>
        <begin position="302"/>
        <end position="319"/>
    </location>
</feature>
<feature type="turn" evidence="3">
    <location>
        <begin position="320"/>
        <end position="322"/>
    </location>
</feature>
<gene>
    <name evidence="2" type="primary">mdh</name>
    <name type="ordered locus">BURPS1710b_A0795</name>
</gene>
<comment type="function">
    <text evidence="2">Catalyzes the reversible oxidation of malate to oxaloacetate.</text>
</comment>
<comment type="catalytic activity">
    <reaction evidence="2">
        <text>(S)-malate + NAD(+) = oxaloacetate + NADH + H(+)</text>
        <dbReference type="Rhea" id="RHEA:21432"/>
        <dbReference type="ChEBI" id="CHEBI:15378"/>
        <dbReference type="ChEBI" id="CHEBI:15589"/>
        <dbReference type="ChEBI" id="CHEBI:16452"/>
        <dbReference type="ChEBI" id="CHEBI:57540"/>
        <dbReference type="ChEBI" id="CHEBI:57945"/>
        <dbReference type="EC" id="1.1.1.37"/>
    </reaction>
</comment>
<comment type="similarity">
    <text evidence="2">Belongs to the LDH/MDH superfamily. MDH type 2 family.</text>
</comment>
<dbReference type="EC" id="1.1.1.37" evidence="2"/>
<dbReference type="EMBL" id="CP000125">
    <property type="protein sequence ID" value="ABA52700.1"/>
    <property type="molecule type" value="Genomic_DNA"/>
</dbReference>
<dbReference type="RefSeq" id="WP_004187735.1">
    <property type="nucleotide sequence ID" value="NC_007435.1"/>
</dbReference>
<dbReference type="PDB" id="3D5T">
    <property type="method" value="X-ray"/>
    <property type="resolution" value="2.51 A"/>
    <property type="chains" value="A/B/C/D=1-327"/>
</dbReference>
<dbReference type="PDBsum" id="3D5T"/>
<dbReference type="SMR" id="Q3JKE9"/>
<dbReference type="EnsemblBacteria" id="ABA52700">
    <property type="protein sequence ID" value="ABA52700"/>
    <property type="gene ID" value="BURPS1710b_A0795"/>
</dbReference>
<dbReference type="KEGG" id="bpm:BURPS1710b_A0795"/>
<dbReference type="HOGENOM" id="CLU_040727_2_0_4"/>
<dbReference type="EvolutionaryTrace" id="Q3JKE9"/>
<dbReference type="Proteomes" id="UP000002700">
    <property type="component" value="Chromosome II"/>
</dbReference>
<dbReference type="GO" id="GO:0030060">
    <property type="term" value="F:L-malate dehydrogenase (NAD+) activity"/>
    <property type="evidence" value="ECO:0007669"/>
    <property type="project" value="UniProtKB-UniRule"/>
</dbReference>
<dbReference type="GO" id="GO:0006108">
    <property type="term" value="P:malate metabolic process"/>
    <property type="evidence" value="ECO:0007669"/>
    <property type="project" value="InterPro"/>
</dbReference>
<dbReference type="GO" id="GO:0006099">
    <property type="term" value="P:tricarboxylic acid cycle"/>
    <property type="evidence" value="ECO:0007669"/>
    <property type="project" value="UniProtKB-UniRule"/>
</dbReference>
<dbReference type="CDD" id="cd01338">
    <property type="entry name" value="MDH_chloroplast-like"/>
    <property type="match status" value="1"/>
</dbReference>
<dbReference type="FunFam" id="3.40.50.720:FF:000010">
    <property type="entry name" value="Malate dehydrogenase"/>
    <property type="match status" value="1"/>
</dbReference>
<dbReference type="FunFam" id="3.90.110.10:FF:000002">
    <property type="entry name" value="Malate dehydrogenase"/>
    <property type="match status" value="1"/>
</dbReference>
<dbReference type="Gene3D" id="3.90.110.10">
    <property type="entry name" value="Lactate dehydrogenase/glycoside hydrolase, family 4, C-terminal"/>
    <property type="match status" value="1"/>
</dbReference>
<dbReference type="Gene3D" id="3.40.50.720">
    <property type="entry name" value="NAD(P)-binding Rossmann-like Domain"/>
    <property type="match status" value="1"/>
</dbReference>
<dbReference type="HAMAP" id="MF_01517">
    <property type="entry name" value="Malate_dehydrog_2"/>
    <property type="match status" value="1"/>
</dbReference>
<dbReference type="InterPro" id="IPR001557">
    <property type="entry name" value="L-lactate/malate_DH"/>
</dbReference>
<dbReference type="InterPro" id="IPR022383">
    <property type="entry name" value="Lactate/malate_DH_C"/>
</dbReference>
<dbReference type="InterPro" id="IPR001236">
    <property type="entry name" value="Lactate/malate_DH_N"/>
</dbReference>
<dbReference type="InterPro" id="IPR015955">
    <property type="entry name" value="Lactate_DH/Glyco_Ohase_4_C"/>
</dbReference>
<dbReference type="InterPro" id="IPR010945">
    <property type="entry name" value="Malate_DH_type2"/>
</dbReference>
<dbReference type="InterPro" id="IPR036291">
    <property type="entry name" value="NAD(P)-bd_dom_sf"/>
</dbReference>
<dbReference type="NCBIfam" id="TIGR01759">
    <property type="entry name" value="MalateDH-SF1"/>
    <property type="match status" value="1"/>
</dbReference>
<dbReference type="NCBIfam" id="NF003916">
    <property type="entry name" value="PRK05442.1"/>
    <property type="match status" value="1"/>
</dbReference>
<dbReference type="PANTHER" id="PTHR23382">
    <property type="entry name" value="MALATE DEHYDROGENASE"/>
    <property type="match status" value="1"/>
</dbReference>
<dbReference type="Pfam" id="PF02866">
    <property type="entry name" value="Ldh_1_C"/>
    <property type="match status" value="1"/>
</dbReference>
<dbReference type="Pfam" id="PF00056">
    <property type="entry name" value="Ldh_1_N"/>
    <property type="match status" value="1"/>
</dbReference>
<dbReference type="PIRSF" id="PIRSF000102">
    <property type="entry name" value="Lac_mal_DH"/>
    <property type="match status" value="1"/>
</dbReference>
<dbReference type="SUPFAM" id="SSF56327">
    <property type="entry name" value="LDH C-terminal domain-like"/>
    <property type="match status" value="1"/>
</dbReference>
<dbReference type="SUPFAM" id="SSF51735">
    <property type="entry name" value="NAD(P)-binding Rossmann-fold domains"/>
    <property type="match status" value="1"/>
</dbReference>
<protein>
    <recommendedName>
        <fullName evidence="2">Malate dehydrogenase</fullName>
        <ecNumber evidence="2">1.1.1.37</ecNumber>
    </recommendedName>
</protein>
<evidence type="ECO:0000250" key="1"/>
<evidence type="ECO:0000255" key="2">
    <source>
        <dbReference type="HAMAP-Rule" id="MF_01517"/>
    </source>
</evidence>
<evidence type="ECO:0007829" key="3">
    <source>
        <dbReference type="PDB" id="3D5T"/>
    </source>
</evidence>
<accession>Q3JKE9</accession>
<keyword id="KW-0002">3D-structure</keyword>
<keyword id="KW-0520">NAD</keyword>
<keyword id="KW-0560">Oxidoreductase</keyword>
<keyword id="KW-0816">Tricarboxylic acid cycle</keyword>